<organismHost>
    <name type="scientific">Homo sapiens</name>
    <name type="common">Human</name>
    <dbReference type="NCBI Taxonomy" id="9606"/>
</organismHost>
<comment type="subcellular location">
    <subcellularLocation>
        <location evidence="2">Membrane</location>
        <topology evidence="2">Multi-pass membrane protein</topology>
    </subcellularLocation>
</comment>
<comment type="similarity">
    <text evidence="2">Belongs to the alphaherpesvirinae HHV-1 UL43 family.</text>
</comment>
<reference key="1">
    <citation type="journal article" date="2002" name="J. Virol.">
        <title>Comparison of the complete DNA sequences of the Oka varicella vaccine and its parental virus.</title>
        <authorList>
            <person name="Gomi Y."/>
            <person name="Sunamachi H."/>
            <person name="Mori Y."/>
            <person name="Nagaike K."/>
            <person name="Takahashi M."/>
            <person name="Yamanishi K."/>
        </authorList>
    </citation>
    <scope>NUCLEOTIDE SEQUENCE [LARGE SCALE GENOMIC DNA]</scope>
    <source>
        <strain>Isolate Human/Japan/P-Oka/1970</strain>
        <strain>Oka varicella vaccine Biken (V-Oka-Biken)</strain>
    </source>
</reference>
<reference key="2">
    <citation type="journal article" date="2008" name="J. Virol.">
        <title>Complete DNA sequences of two oka strain varicella-zoster virus genomes.</title>
        <authorList>
            <person name="Tillieux S.L."/>
            <person name="Halsey W.S."/>
            <person name="Thomas E.S."/>
            <person name="Voycik J.J."/>
            <person name="Sathe G.M."/>
            <person name="Vassilev V."/>
        </authorList>
    </citation>
    <scope>NUCLEOTIDE SEQUENCE [LARGE SCALE GENOMIC DNA]</scope>
    <source>
        <strain>Oka varicella vaccine VarilRix (V-Oka-GSK)</strain>
        <strain>Oka varicella vaccine Varivax (V-Oka-Merck)</strain>
    </source>
</reference>
<evidence type="ECO:0000255" key="1"/>
<evidence type="ECO:0000305" key="2"/>
<feature type="chain" id="PRO_0000385492" description="Membrane protein UL43 homolog">
    <location>
        <begin position="1"/>
        <end position="406"/>
    </location>
</feature>
<feature type="transmembrane region" description="Helical" evidence="1">
    <location>
        <begin position="48"/>
        <end position="68"/>
    </location>
</feature>
<feature type="transmembrane region" description="Helical" evidence="1">
    <location>
        <begin position="71"/>
        <end position="91"/>
    </location>
</feature>
<feature type="transmembrane region" description="Helical" evidence="1">
    <location>
        <begin position="103"/>
        <end position="123"/>
    </location>
</feature>
<feature type="transmembrane region" description="Helical" evidence="1">
    <location>
        <begin position="126"/>
        <end position="146"/>
    </location>
</feature>
<feature type="transmembrane region" description="Helical" evidence="1">
    <location>
        <begin position="162"/>
        <end position="182"/>
    </location>
</feature>
<feature type="transmembrane region" description="Helical" evidence="1">
    <location>
        <begin position="188"/>
        <end position="208"/>
    </location>
</feature>
<feature type="transmembrane region" description="Helical" evidence="1">
    <location>
        <begin position="266"/>
        <end position="286"/>
    </location>
</feature>
<feature type="transmembrane region" description="Helical" evidence="1">
    <location>
        <begin position="299"/>
        <end position="319"/>
    </location>
</feature>
<feature type="transmembrane region" description="Helical" evidence="1">
    <location>
        <begin position="339"/>
        <end position="359"/>
    </location>
</feature>
<feature type="transmembrane region" description="Helical" evidence="1">
    <location>
        <begin position="386"/>
        <end position="406"/>
    </location>
</feature>
<sequence>MAVNGERAVHDENLGVLDRELIRAQSIQGCVGNPQECNSCAITSASRLFLVGLQASVITSGLILQYHVCEAAVNATIMGLIVVSGLWPTSVKFLRTLAKLGRCLQTVVVLGFAVLWAVGCPISRDLPFVELLGISISAITGTVAAVHIHYYNFVTTFNGPHIYFYVMMLGTGLGGLLTVILYMYVSKYEVLIGLCISIVTLVSIVDAATDLQDTCIYRKNRHKQLNTYTDLGFAVVYTQNDRGRVCDHRESSRTLKRVFKGIRIMSVIPPVLYIVTPLMWAISHIIKLNHFIKLTQVTLAVSIGGHIIAFGLQGFAVLYQEKKNLWVIVLYTTTSVTGIAVTFAGISWGAIIILTSTVAAGLTCIQMMRLSVKPIDCFMASHITKVYHVCVYIIINLCYLCGTYVS</sequence>
<organism>
    <name type="scientific">Varicella-zoster virus (strain Oka vaccine)</name>
    <name type="common">HHV-3</name>
    <name type="synonym">Human herpesvirus 3</name>
    <dbReference type="NCBI Taxonomy" id="341980"/>
    <lineage>
        <taxon>Viruses</taxon>
        <taxon>Duplodnaviria</taxon>
        <taxon>Heunggongvirae</taxon>
        <taxon>Peploviricota</taxon>
        <taxon>Herviviricetes</taxon>
        <taxon>Herpesvirales</taxon>
        <taxon>Orthoherpesviridae</taxon>
        <taxon>Alphaherpesvirinae</taxon>
        <taxon>Varicellovirus</taxon>
        <taxon>Varicellovirus humanalpha3</taxon>
        <taxon>Human herpesvirus 3</taxon>
    </lineage>
</organism>
<gene>
    <name type="ORF">ORF15</name>
</gene>
<keyword id="KW-0472">Membrane</keyword>
<keyword id="KW-0812">Transmembrane</keyword>
<keyword id="KW-1133">Transmembrane helix</keyword>
<proteinExistence type="inferred from homology"/>
<name>MB43_VZVO</name>
<accession>Q4JQW0</accession>
<protein>
    <recommendedName>
        <fullName>Membrane protein UL43 homolog</fullName>
    </recommendedName>
    <alternativeName>
        <fullName>Membrane protein ORF15</fullName>
    </alternativeName>
</protein>
<dbReference type="EMBL" id="AB097932">
    <property type="status" value="NOT_ANNOTATED_CDS"/>
    <property type="molecule type" value="Genomic_DNA"/>
</dbReference>
<dbReference type="EMBL" id="AB097933">
    <property type="status" value="NOT_ANNOTATED_CDS"/>
    <property type="molecule type" value="Genomic_DNA"/>
</dbReference>
<dbReference type="EMBL" id="DQ008354">
    <property type="protein sequence ID" value="AAY57632.1"/>
    <property type="molecule type" value="Genomic_DNA"/>
</dbReference>
<dbReference type="EMBL" id="DQ008355">
    <property type="protein sequence ID" value="AAY57703.1"/>
    <property type="molecule type" value="Genomic_DNA"/>
</dbReference>
<dbReference type="RefSeq" id="NP_040138.1">
    <property type="nucleotide sequence ID" value="NC_001348.1"/>
</dbReference>
<dbReference type="IntAct" id="Q4JQW0">
    <property type="interactions" value="6"/>
</dbReference>
<dbReference type="DNASU" id="1487652"/>
<dbReference type="GeneID" id="1487652"/>
<dbReference type="KEGG" id="vg:1487652"/>
<dbReference type="Proteomes" id="UP000002603">
    <property type="component" value="Genome"/>
</dbReference>
<dbReference type="Proteomes" id="UP000008504">
    <property type="component" value="Genome"/>
</dbReference>
<dbReference type="Proteomes" id="UP000008505">
    <property type="component" value="Genome"/>
</dbReference>
<dbReference type="Proteomes" id="UP000008506">
    <property type="component" value="Genome"/>
</dbReference>
<dbReference type="GO" id="GO:0016020">
    <property type="term" value="C:membrane"/>
    <property type="evidence" value="ECO:0007669"/>
    <property type="project" value="UniProtKB-SubCell"/>
</dbReference>
<dbReference type="GO" id="GO:0019033">
    <property type="term" value="C:viral tegument"/>
    <property type="evidence" value="ECO:0007669"/>
    <property type="project" value="InterPro"/>
</dbReference>
<dbReference type="InterPro" id="IPR007764">
    <property type="entry name" value="Herpes_UL43"/>
</dbReference>
<dbReference type="Pfam" id="PF05072">
    <property type="entry name" value="Herpes_UL43"/>
    <property type="match status" value="1"/>
</dbReference>